<organism>
    <name type="scientific">Verminephrobacter eiseniae (strain EF01-2)</name>
    <dbReference type="NCBI Taxonomy" id="391735"/>
    <lineage>
        <taxon>Bacteria</taxon>
        <taxon>Pseudomonadati</taxon>
        <taxon>Pseudomonadota</taxon>
        <taxon>Betaproteobacteria</taxon>
        <taxon>Burkholderiales</taxon>
        <taxon>Comamonadaceae</taxon>
        <taxon>Verminephrobacter</taxon>
    </lineage>
</organism>
<name>LPXK_VEREI</name>
<comment type="function">
    <text evidence="1">Transfers the gamma-phosphate of ATP to the 4'-position of a tetraacyldisaccharide 1-phosphate intermediate (termed DS-1-P) to form tetraacyldisaccharide 1,4'-bis-phosphate (lipid IVA).</text>
</comment>
<comment type="catalytic activity">
    <reaction>
        <text>a lipid A disaccharide + ATP = a lipid IVA + ADP + H(+)</text>
        <dbReference type="Rhea" id="RHEA:67840"/>
        <dbReference type="ChEBI" id="CHEBI:15378"/>
        <dbReference type="ChEBI" id="CHEBI:30616"/>
        <dbReference type="ChEBI" id="CHEBI:176343"/>
        <dbReference type="ChEBI" id="CHEBI:176425"/>
        <dbReference type="ChEBI" id="CHEBI:456216"/>
        <dbReference type="EC" id="2.7.1.130"/>
    </reaction>
</comment>
<comment type="pathway">
    <text>Glycolipid biosynthesis; lipid IV(A) biosynthesis; lipid IV(A) from (3R)-3-hydroxytetradecanoyl-[acyl-carrier-protein] and UDP-N-acetyl-alpha-D-glucosamine: step 6/6.</text>
</comment>
<comment type="similarity">
    <text evidence="3">In the N-terminal section; belongs to the LpxK family.</text>
</comment>
<comment type="similarity">
    <text evidence="3">In the C-terminal section; belongs to the UPF0434 family.</text>
</comment>
<protein>
    <recommendedName>
        <fullName>Tetraacyldisaccharide 4'-kinase</fullName>
        <ecNumber>2.7.1.130</ecNumber>
    </recommendedName>
    <alternativeName>
        <fullName>Lipid A 4'-kinase</fullName>
    </alternativeName>
</protein>
<accession>A1WSH4</accession>
<reference key="1">
    <citation type="submission" date="2006-12" db="EMBL/GenBank/DDBJ databases">
        <title>Complete sequence of chromosome 1 of Verminephrobacter eiseniae EF01-2.</title>
        <authorList>
            <person name="Copeland A."/>
            <person name="Lucas S."/>
            <person name="Lapidus A."/>
            <person name="Barry K."/>
            <person name="Detter J.C."/>
            <person name="Glavina del Rio T."/>
            <person name="Dalin E."/>
            <person name="Tice H."/>
            <person name="Pitluck S."/>
            <person name="Chertkov O."/>
            <person name="Brettin T."/>
            <person name="Bruce D."/>
            <person name="Han C."/>
            <person name="Tapia R."/>
            <person name="Gilna P."/>
            <person name="Schmutz J."/>
            <person name="Larimer F."/>
            <person name="Land M."/>
            <person name="Hauser L."/>
            <person name="Kyrpides N."/>
            <person name="Kim E."/>
            <person name="Stahl D."/>
            <person name="Richardson P."/>
        </authorList>
    </citation>
    <scope>NUCLEOTIDE SEQUENCE [LARGE SCALE GENOMIC DNA]</scope>
    <source>
        <strain>EF01-2</strain>
    </source>
</reference>
<evidence type="ECO:0000250" key="1"/>
<evidence type="ECO:0000255" key="2"/>
<evidence type="ECO:0000305" key="3"/>
<gene>
    <name type="primary">lpxK</name>
    <name type="ordered locus">Veis_4893</name>
</gene>
<dbReference type="EC" id="2.7.1.130"/>
<dbReference type="EMBL" id="CP000542">
    <property type="protein sequence ID" value="ABM60581.1"/>
    <property type="molecule type" value="Genomic_DNA"/>
</dbReference>
<dbReference type="SMR" id="A1WSH4"/>
<dbReference type="STRING" id="391735.Veis_4893"/>
<dbReference type="KEGG" id="vei:Veis_4893"/>
<dbReference type="eggNOG" id="COG1663">
    <property type="taxonomic scope" value="Bacteria"/>
</dbReference>
<dbReference type="eggNOG" id="COG2835">
    <property type="taxonomic scope" value="Bacteria"/>
</dbReference>
<dbReference type="HOGENOM" id="CLU_038816_2_0_4"/>
<dbReference type="OrthoDB" id="9766423at2"/>
<dbReference type="UniPathway" id="UPA00359">
    <property type="reaction ID" value="UER00482"/>
</dbReference>
<dbReference type="Proteomes" id="UP000000374">
    <property type="component" value="Chromosome"/>
</dbReference>
<dbReference type="GO" id="GO:0005886">
    <property type="term" value="C:plasma membrane"/>
    <property type="evidence" value="ECO:0007669"/>
    <property type="project" value="TreeGrafter"/>
</dbReference>
<dbReference type="GO" id="GO:0005524">
    <property type="term" value="F:ATP binding"/>
    <property type="evidence" value="ECO:0007669"/>
    <property type="project" value="UniProtKB-UniRule"/>
</dbReference>
<dbReference type="GO" id="GO:0009029">
    <property type="term" value="F:tetraacyldisaccharide 4'-kinase activity"/>
    <property type="evidence" value="ECO:0007669"/>
    <property type="project" value="UniProtKB-UniRule"/>
</dbReference>
<dbReference type="GO" id="GO:0009245">
    <property type="term" value="P:lipid A biosynthetic process"/>
    <property type="evidence" value="ECO:0007669"/>
    <property type="project" value="UniProtKB-UniRule"/>
</dbReference>
<dbReference type="GO" id="GO:0009244">
    <property type="term" value="P:lipopolysaccharide core region biosynthetic process"/>
    <property type="evidence" value="ECO:0007669"/>
    <property type="project" value="TreeGrafter"/>
</dbReference>
<dbReference type="FunFam" id="2.20.25.10:FF:000002">
    <property type="entry name" value="UPF0434 protein YcaR"/>
    <property type="match status" value="1"/>
</dbReference>
<dbReference type="Gene3D" id="2.20.25.10">
    <property type="match status" value="1"/>
</dbReference>
<dbReference type="HAMAP" id="MF_00409">
    <property type="entry name" value="LpxK"/>
    <property type="match status" value="1"/>
</dbReference>
<dbReference type="HAMAP" id="MF_01187">
    <property type="entry name" value="UPF0434"/>
    <property type="match status" value="1"/>
</dbReference>
<dbReference type="InterPro" id="IPR003758">
    <property type="entry name" value="LpxK"/>
</dbReference>
<dbReference type="InterPro" id="IPR027417">
    <property type="entry name" value="P-loop_NTPase"/>
</dbReference>
<dbReference type="InterPro" id="IPR005651">
    <property type="entry name" value="Trm112-like"/>
</dbReference>
<dbReference type="NCBIfam" id="TIGR00682">
    <property type="entry name" value="lpxK"/>
    <property type="match status" value="1"/>
</dbReference>
<dbReference type="PANTHER" id="PTHR42724">
    <property type="entry name" value="TETRAACYLDISACCHARIDE 4'-KINASE"/>
    <property type="match status" value="1"/>
</dbReference>
<dbReference type="PANTHER" id="PTHR42724:SF1">
    <property type="entry name" value="TETRAACYLDISACCHARIDE 4'-KINASE, MITOCHONDRIAL-RELATED"/>
    <property type="match status" value="1"/>
</dbReference>
<dbReference type="Pfam" id="PF02606">
    <property type="entry name" value="LpxK"/>
    <property type="match status" value="1"/>
</dbReference>
<dbReference type="Pfam" id="PF03966">
    <property type="entry name" value="Trm112p"/>
    <property type="match status" value="1"/>
</dbReference>
<dbReference type="SUPFAM" id="SSF52540">
    <property type="entry name" value="P-loop containing nucleoside triphosphate hydrolases"/>
    <property type="match status" value="1"/>
</dbReference>
<dbReference type="SUPFAM" id="SSF158997">
    <property type="entry name" value="Trm112p-like"/>
    <property type="match status" value="1"/>
</dbReference>
<feature type="chain" id="PRO_0000291253" description="Tetraacyldisaccharide 4'-kinase">
    <location>
        <begin position="1"/>
        <end position="430"/>
    </location>
</feature>
<feature type="region of interest" description="Tetraacyldisaccharide 4'-kinase">
    <location>
        <begin position="1"/>
        <end position="370"/>
    </location>
</feature>
<feature type="region of interest" description="UPF0434">
    <location>
        <begin position="371"/>
        <end position="396"/>
    </location>
</feature>
<feature type="binding site" evidence="2">
    <location>
        <begin position="70"/>
        <end position="77"/>
    </location>
    <ligand>
        <name>ATP</name>
        <dbReference type="ChEBI" id="CHEBI:30616"/>
    </ligand>
</feature>
<sequence>MGALRPQPPRMPAGHVAPAYWQKRGLAAWALWPLAQLYRALVAARRGLYRAGWLKAQHPGRPVIVVGNVIAGGAGKTPVVIALARHLQARGLRVGVIARGHGRSRRDCRAVLPDSPASAVGDEPALIARHFANGPAVPVFVARRRISAARALLAAHPDTDVLLCDDGLQHLALRRDLEICVFNDQGLGNGFLQPAGPLREPWPRSVDFVLHAGAAPGGSPAPAFGVQRSLAPCALRSDGAAVPLARLQGQPLHALAAVARPGEFFAMLQARGLTLAHTEALPDHYDLQRWERMTDPRLTLICTEKDAVKLWPLHPDALAVPLVLHIDPGFFAALDAWLPARRAMPEIAPGSDAAAIIAGTEPTLPENHRPMDPKLLQLLVCPVTKGPLRYDRAAQELISRSARLAYPVRDGIPVLLENEARPLTDEELEQ</sequence>
<proteinExistence type="inferred from homology"/>
<keyword id="KW-0067">ATP-binding</keyword>
<keyword id="KW-0418">Kinase</keyword>
<keyword id="KW-0441">Lipid A biosynthesis</keyword>
<keyword id="KW-0444">Lipid biosynthesis</keyword>
<keyword id="KW-0443">Lipid metabolism</keyword>
<keyword id="KW-0547">Nucleotide-binding</keyword>
<keyword id="KW-1185">Reference proteome</keyword>
<keyword id="KW-0808">Transferase</keyword>